<dbReference type="EMBL" id="BX284606">
    <property type="protein sequence ID" value="CCD68940.1"/>
    <property type="molecule type" value="Genomic_DNA"/>
</dbReference>
<dbReference type="PIR" id="T29380">
    <property type="entry name" value="T29380"/>
</dbReference>
<dbReference type="RefSeq" id="NP_508412.1">
    <property type="nucleotide sequence ID" value="NM_076011.4"/>
</dbReference>
<dbReference type="SMR" id="Q22494"/>
<dbReference type="BioGRID" id="45479">
    <property type="interactions" value="26"/>
</dbReference>
<dbReference type="DIP" id="DIP-24603N"/>
<dbReference type="FunCoup" id="Q22494">
    <property type="interactions" value="3866"/>
</dbReference>
<dbReference type="STRING" id="6239.T14F9.1.1"/>
<dbReference type="TCDB" id="3.A.2.2.7">
    <property type="family name" value="the h+- or na+-translocating f-type, v-type and a-type atpase (f-atpase) superfamily"/>
</dbReference>
<dbReference type="iPTMnet" id="Q22494"/>
<dbReference type="PaxDb" id="6239-T14F9.1.1"/>
<dbReference type="PeptideAtlas" id="Q22494"/>
<dbReference type="EnsemblMetazoa" id="T14F9.1.1">
    <property type="protein sequence ID" value="T14F9.1.1"/>
    <property type="gene ID" value="WBGene00020507"/>
</dbReference>
<dbReference type="EnsemblMetazoa" id="T14F9.1.2">
    <property type="protein sequence ID" value="T14F9.1.2"/>
    <property type="gene ID" value="WBGene00020507"/>
</dbReference>
<dbReference type="GeneID" id="180534"/>
<dbReference type="KEGG" id="cel:CELE_T14F9.1"/>
<dbReference type="UCSC" id="T14F9.1.1">
    <property type="organism name" value="c. elegans"/>
</dbReference>
<dbReference type="AGR" id="WB:WBGene00020507"/>
<dbReference type="CTD" id="180534"/>
<dbReference type="WormBase" id="T14F9.1">
    <property type="protein sequence ID" value="CE07497"/>
    <property type="gene ID" value="WBGene00020507"/>
    <property type="gene designation" value="vha-15"/>
</dbReference>
<dbReference type="eggNOG" id="KOG2759">
    <property type="taxonomic scope" value="Eukaryota"/>
</dbReference>
<dbReference type="GeneTree" id="ENSGT00390000003289"/>
<dbReference type="HOGENOM" id="CLU_025709_2_0_1"/>
<dbReference type="InParanoid" id="Q22494"/>
<dbReference type="OMA" id="HSGHLRW"/>
<dbReference type="OrthoDB" id="10263554at2759"/>
<dbReference type="PhylomeDB" id="Q22494"/>
<dbReference type="Reactome" id="R-CEL-1222556">
    <property type="pathway name" value="ROS and RNS production in phagocytes"/>
</dbReference>
<dbReference type="Reactome" id="R-CEL-77387">
    <property type="pathway name" value="Insulin receptor recycling"/>
</dbReference>
<dbReference type="Reactome" id="R-CEL-917977">
    <property type="pathway name" value="Transferrin endocytosis and recycling"/>
</dbReference>
<dbReference type="Reactome" id="R-CEL-9639288">
    <property type="pathway name" value="Amino acids regulate mTORC1"/>
</dbReference>
<dbReference type="Reactome" id="R-CEL-983712">
    <property type="pathway name" value="Ion channel transport"/>
</dbReference>
<dbReference type="PRO" id="PR:Q22494"/>
<dbReference type="Proteomes" id="UP000001940">
    <property type="component" value="Chromosome X"/>
</dbReference>
<dbReference type="Bgee" id="WBGene00020507">
    <property type="expression patterns" value="Expressed in larva and 4 other cell types or tissues"/>
</dbReference>
<dbReference type="GO" id="GO:0000221">
    <property type="term" value="C:vacuolar proton-transporting V-type ATPase, V1 domain"/>
    <property type="evidence" value="ECO:0007669"/>
    <property type="project" value="InterPro"/>
</dbReference>
<dbReference type="GO" id="GO:0046961">
    <property type="term" value="F:proton-transporting ATPase activity, rotational mechanism"/>
    <property type="evidence" value="ECO:0007669"/>
    <property type="project" value="InterPro"/>
</dbReference>
<dbReference type="CDD" id="cd00256">
    <property type="entry name" value="VATPase_H"/>
    <property type="match status" value="1"/>
</dbReference>
<dbReference type="FunFam" id="1.25.10.10:FF:000067">
    <property type="entry name" value="V-type proton ATPase subunit H"/>
    <property type="match status" value="1"/>
</dbReference>
<dbReference type="FunFam" id="1.25.40.150:FF:000001">
    <property type="entry name" value="V-type proton ATPase subunit H"/>
    <property type="match status" value="1"/>
</dbReference>
<dbReference type="Gene3D" id="1.25.10.10">
    <property type="entry name" value="Leucine-rich Repeat Variant"/>
    <property type="match status" value="1"/>
</dbReference>
<dbReference type="Gene3D" id="1.25.40.150">
    <property type="entry name" value="V-type ATPase, subunit H, C-terminal domain"/>
    <property type="match status" value="1"/>
</dbReference>
<dbReference type="InterPro" id="IPR011989">
    <property type="entry name" value="ARM-like"/>
</dbReference>
<dbReference type="InterPro" id="IPR016024">
    <property type="entry name" value="ARM-type_fold"/>
</dbReference>
<dbReference type="InterPro" id="IPR004908">
    <property type="entry name" value="ATPase_V1-cplx_hsu"/>
</dbReference>
<dbReference type="InterPro" id="IPR011987">
    <property type="entry name" value="ATPase_V1-cplx_hsu_C"/>
</dbReference>
<dbReference type="InterPro" id="IPR038497">
    <property type="entry name" value="ATPase_V1-cplx_hsu_C_sf"/>
</dbReference>
<dbReference type="PANTHER" id="PTHR10698">
    <property type="entry name" value="V-TYPE PROTON ATPASE SUBUNIT H"/>
    <property type="match status" value="1"/>
</dbReference>
<dbReference type="PANTHER" id="PTHR10698:SF0">
    <property type="entry name" value="V-TYPE PROTON ATPASE SUBUNIT H"/>
    <property type="match status" value="1"/>
</dbReference>
<dbReference type="Pfam" id="PF11698">
    <property type="entry name" value="V-ATPase_H_C"/>
    <property type="match status" value="1"/>
</dbReference>
<dbReference type="Pfam" id="PF03224">
    <property type="entry name" value="V-ATPase_H_N"/>
    <property type="match status" value="1"/>
</dbReference>
<dbReference type="PIRSF" id="PIRSF032184">
    <property type="entry name" value="ATPase_V1_H"/>
    <property type="match status" value="1"/>
</dbReference>
<dbReference type="SUPFAM" id="SSF48371">
    <property type="entry name" value="ARM repeat"/>
    <property type="match status" value="1"/>
</dbReference>
<organism>
    <name type="scientific">Caenorhabditis elegans</name>
    <dbReference type="NCBI Taxonomy" id="6239"/>
    <lineage>
        <taxon>Eukaryota</taxon>
        <taxon>Metazoa</taxon>
        <taxon>Ecdysozoa</taxon>
        <taxon>Nematoda</taxon>
        <taxon>Chromadorea</taxon>
        <taxon>Rhabditida</taxon>
        <taxon>Rhabditina</taxon>
        <taxon>Rhabditomorpha</taxon>
        <taxon>Rhabditoidea</taxon>
        <taxon>Rhabditidae</taxon>
        <taxon>Peloderinae</taxon>
        <taxon>Caenorhabditis</taxon>
    </lineage>
</organism>
<gene>
    <name evidence="4" type="primary">vha-15</name>
    <name evidence="4" type="ORF">T14F9.1</name>
</gene>
<comment type="function">
    <text evidence="1 2">Subunit of the V1 complex of vacuolar(H+)-ATPase (V-ATPase), a multisubunit enzyme composed of a peripheral complex (V1) that hydrolyzes ATP and a membrane integral complex (V0) that translocates protons (By similarity). V-ATPase is responsible for acidifying and maintaining the pH of intracellular compartments and in some cell types, is targeted to the plasma membrane, where it is responsible for acidifying the extracellular environment (By similarity). Subunit H is essential for V-ATPase activity, but not for the assembly of the complex (By similarity).</text>
</comment>
<comment type="subunit">
    <text evidence="1">V-ATPase is a heteromultimeric enzyme made up of two complexes: the ATP-hydrolytic V1 complex and the proton translocation V0 complex (By similarity). The V1 complex consists of three catalytic AB heterodimers that form a heterohexamer, three peripheral stalks each consisting of EG heterodimers, one central rotor including subunits D and F, and the regulatory subunits C and H (By similarity). The proton translocation complex V0 consists of the proton transport subunit a, a ring of proteolipid subunits c9c'', rotary subunit d, subunits e and f, and the accessory subunits vah-19/Ac45 and vah-20/PRR (By similarity).</text>
</comment>
<comment type="similarity">
    <text evidence="3">Belongs to the V-ATPase H subunit family.</text>
</comment>
<reference key="1">
    <citation type="journal article" date="1998" name="Science">
        <title>Genome sequence of the nematode C. elegans: a platform for investigating biology.</title>
        <authorList>
            <consortium name="The C. elegans sequencing consortium"/>
        </authorList>
    </citation>
    <scope>NUCLEOTIDE SEQUENCE [LARGE SCALE GENOMIC DNA]</scope>
    <source>
        <strain>Bristol N2</strain>
    </source>
</reference>
<name>VATH2_CAEEL</name>
<sequence>MAEVPHHNIPAVDMLNATSRLQLEAQELRNNKPNWGSYFRSQMIQEDDYNFITSFENAKSKEERDQVLAANNANGQAAKTMANLITQVAKDQNVRYVLTLFDDMLQEDKSRVELFHSAAARQKRTVWSQYLGILQRQDNFIVNQMSSIIAKLACFGTTRMEGQDLQYYFSFLKEQLKNSTTNDYMNTTARCLQMMLRHDEYRHEFVDSDGVQTLVTALNGKTNFQLQYQLIFAVWCLTFNADIARKAPSLGLIQALGDILSESTKEKVIRIILASFVNILSKVDEREVKREAALQMVQCKTLKTLELMDAKKYDDPDLEDDVKFLTEELTLSVHDLSSYDEYYSEVRSGRLQWSPVHKSEKFWRENASKFNDKQFEVVKILIKLLESSHDPLILCVASHDIGEYVRHYPRGKTVVEQYQGKAAVMRLLTAEDPNVRYHALLAVQKLMVHNWEYLGKQLDSDVQTDTVAVK</sequence>
<accession>Q22494</accession>
<keyword id="KW-0375">Hydrogen ion transport</keyword>
<keyword id="KW-0406">Ion transport</keyword>
<keyword id="KW-1185">Reference proteome</keyword>
<keyword id="KW-0813">Transport</keyword>
<evidence type="ECO:0000250" key="1">
    <source>
        <dbReference type="UniProtKB" id="O46563"/>
    </source>
</evidence>
<evidence type="ECO:0000250" key="2">
    <source>
        <dbReference type="UniProtKB" id="P41807"/>
    </source>
</evidence>
<evidence type="ECO:0000305" key="3"/>
<evidence type="ECO:0000312" key="4">
    <source>
        <dbReference type="WormBase" id="T14F9.1"/>
    </source>
</evidence>
<protein>
    <recommendedName>
        <fullName>Probable V-type proton ATPase subunit H 2</fullName>
        <shortName>V-ATPase subunit H 2</shortName>
    </recommendedName>
    <alternativeName>
        <fullName>Vacuolar proton pump subunit H 2</fullName>
    </alternativeName>
</protein>
<proteinExistence type="inferred from homology"/>
<feature type="chain" id="PRO_0000124199" description="Probable V-type proton ATPase subunit H 2">
    <location>
        <begin position="1"/>
        <end position="470"/>
    </location>
</feature>